<accession>P13661</accession>
<feature type="signal peptide" evidence="4">
    <location>
        <begin position="1"/>
        <end position="25"/>
    </location>
</feature>
<feature type="chain" id="PRO_0000017024" description="Beta-lactamase OXA-1">
    <location>
        <begin position="26"/>
        <end position="276"/>
    </location>
</feature>
<feature type="active site" description="Acyl-ester intermediate" evidence="2 6 8 13 14">
    <location>
        <position position="71"/>
    </location>
</feature>
<feature type="binding site" evidence="6 8 13 14">
    <location>
        <position position="71"/>
    </location>
    <ligand>
        <name>a beta-lactam</name>
        <dbReference type="ChEBI" id="CHEBI:35627"/>
    </ligand>
</feature>
<feature type="binding site" evidence="6 8 13 14">
    <location>
        <position position="74"/>
    </location>
    <ligand>
        <name>a beta-lactam</name>
        <dbReference type="ChEBI" id="CHEBI:35627"/>
    </ligand>
</feature>
<feature type="binding site" evidence="6 8 13 14">
    <location>
        <position position="118"/>
    </location>
    <ligand>
        <name>a beta-lactam</name>
        <dbReference type="ChEBI" id="CHEBI:35627"/>
    </ligand>
</feature>
<feature type="binding site" evidence="6 8 13 14">
    <location>
        <position position="216"/>
    </location>
    <ligand>
        <name>a beta-lactam</name>
        <dbReference type="ChEBI" id="CHEBI:35627"/>
    </ligand>
</feature>
<feature type="binding site" evidence="6 8 13 14">
    <location>
        <position position="218"/>
    </location>
    <ligand>
        <name>a beta-lactam</name>
        <dbReference type="ChEBI" id="CHEBI:35627"/>
    </ligand>
</feature>
<feature type="modified residue" description="N6-carboxylysine" evidence="4 6">
    <location>
        <position position="74"/>
    </location>
</feature>
<feature type="mutagenesis site" description="Abolishes hydrolysis of ampicillin. Drastically reduces catalytic efficiency, about 70,000-fold, with respect to nitrocefin." evidence="5">
    <original>S</original>
    <variation>G</variation>
    <location>
        <position position="71"/>
    </location>
</feature>
<feature type="mutagenesis site" description="Abolishes hydrolysis of ampicillin. Drastically reduces catalytic efficiency, about 2000-fold, with respect to nitrocefin." evidence="5">
    <original>K</original>
    <variation>A</variation>
    <variation>E</variation>
    <variation>D</variation>
    <location>
        <position position="74"/>
    </location>
</feature>
<feature type="helix" evidence="15">
    <location>
        <begin position="30"/>
        <end position="37"/>
    </location>
</feature>
<feature type="strand" evidence="15">
    <location>
        <begin position="40"/>
        <end position="48"/>
    </location>
</feature>
<feature type="turn" evidence="15">
    <location>
        <begin position="49"/>
        <end position="51"/>
    </location>
</feature>
<feature type="strand" evidence="15">
    <location>
        <begin position="54"/>
        <end position="58"/>
    </location>
</feature>
<feature type="helix" evidence="15">
    <location>
        <begin position="60"/>
        <end position="63"/>
    </location>
</feature>
<feature type="helix" evidence="15">
    <location>
        <begin position="70"/>
        <end position="72"/>
    </location>
</feature>
<feature type="helix" evidence="15">
    <location>
        <begin position="73"/>
        <end position="83"/>
    </location>
</feature>
<feature type="helix" evidence="15">
    <location>
        <begin position="103"/>
        <end position="105"/>
    </location>
</feature>
<feature type="helix" evidence="15">
    <location>
        <begin position="111"/>
        <end position="117"/>
    </location>
</feature>
<feature type="helix" evidence="15">
    <location>
        <begin position="120"/>
        <end position="130"/>
    </location>
</feature>
<feature type="helix" evidence="15">
    <location>
        <begin position="132"/>
        <end position="142"/>
    </location>
</feature>
<feature type="turn" evidence="15">
    <location>
        <begin position="153"/>
        <end position="155"/>
    </location>
</feature>
<feature type="helix" evidence="15">
    <location>
        <begin position="158"/>
        <end position="161"/>
    </location>
</feature>
<feature type="strand" evidence="15">
    <location>
        <begin position="164"/>
        <end position="167"/>
    </location>
</feature>
<feature type="helix" evidence="15">
    <location>
        <begin position="172"/>
        <end position="183"/>
    </location>
</feature>
<feature type="strand" evidence="15">
    <location>
        <begin position="187"/>
        <end position="189"/>
    </location>
</feature>
<feature type="helix" evidence="15">
    <location>
        <begin position="191"/>
        <end position="201"/>
    </location>
</feature>
<feature type="strand" evidence="15">
    <location>
        <begin position="202"/>
        <end position="205"/>
    </location>
</feature>
<feature type="strand" evidence="15">
    <location>
        <begin position="211"/>
        <end position="220"/>
    </location>
</feature>
<feature type="strand" evidence="15">
    <location>
        <begin position="227"/>
        <end position="236"/>
    </location>
</feature>
<feature type="strand" evidence="15">
    <location>
        <begin position="242"/>
        <end position="251"/>
    </location>
</feature>
<feature type="helix" evidence="15">
    <location>
        <begin position="259"/>
        <end position="273"/>
    </location>
</feature>
<evidence type="ECO:0000250" key="1">
    <source>
        <dbReference type="UniProtKB" id="P14489"/>
    </source>
</evidence>
<evidence type="ECO:0000255" key="2">
    <source>
        <dbReference type="PROSITE-ProRule" id="PRU10103"/>
    </source>
</evidence>
<evidence type="ECO:0000269" key="3">
    <source>
    </source>
</evidence>
<evidence type="ECO:0000269" key="4">
    <source>
    </source>
</evidence>
<evidence type="ECO:0000269" key="5">
    <source>
    </source>
</evidence>
<evidence type="ECO:0000269" key="6">
    <source>
    </source>
</evidence>
<evidence type="ECO:0000269" key="7">
    <source>
    </source>
</evidence>
<evidence type="ECO:0000269" key="8">
    <source>
    </source>
</evidence>
<evidence type="ECO:0000303" key="9">
    <source>
    </source>
</evidence>
<evidence type="ECO:0000303" key="10">
    <source>
    </source>
</evidence>
<evidence type="ECO:0000305" key="11"/>
<evidence type="ECO:0007744" key="12">
    <source>
        <dbReference type="PDB" id="1M6K"/>
    </source>
</evidence>
<evidence type="ECO:0007744" key="13">
    <source>
        <dbReference type="PDB" id="3ISG"/>
    </source>
</evidence>
<evidence type="ECO:0007744" key="14">
    <source>
        <dbReference type="PDB" id="4MLL"/>
    </source>
</evidence>
<evidence type="ECO:0007829" key="15">
    <source>
        <dbReference type="PDB" id="4MLL"/>
    </source>
</evidence>
<reference key="1">
    <citation type="journal article" date="1987" name="Proc. Natl. Acad. Sci. U.S.A.">
        <title>Precise insertion of antibiotic resistance determinants into Tn21-like transposons: nucleotide sequence of the OXA-1 beta-lactamase gene.</title>
        <authorList>
            <person name="Ouellette M."/>
            <person name="Bissonnette L."/>
            <person name="Roy P.H."/>
        </authorList>
    </citation>
    <scope>NUCLEOTIDE SEQUENCE [GENOMIC DNA]</scope>
    <source>
        <transposon>Tn2603</transposon>
    </source>
</reference>
<reference key="2">
    <citation type="submission" date="2008-11" db="EMBL/GenBank/DDBJ databases">
        <authorList>
            <person name="Ouellette M."/>
            <person name="Roy P.H."/>
        </authorList>
    </citation>
    <scope>SEQUENCE REVISION TO 131</scope>
</reference>
<reference key="3">
    <citation type="journal article" date="2001" name="Antimicrob. Agents Chemother.">
        <title>Oxacillinase-mediated resistance to cefepime and susceptibility to ceftazidime in Pseudomonas aeruginosa.</title>
        <authorList>
            <person name="Aubert D."/>
            <person name="Poirel L."/>
            <person name="Chevalier J."/>
            <person name="Leotard S."/>
            <person name="Pages J.M."/>
            <person name="Nordmann P."/>
        </authorList>
    </citation>
    <scope>FUNCTION</scope>
    <scope>CATALYTIC ACTIVITY</scope>
    <scope>BIOPHYSICOCHEMICAL PROPERTIES</scope>
</reference>
<reference key="4">
    <citation type="journal article" date="2006" name="J. Antimicrob. Chemother.">
        <title>OXA-1 is OXA-30 is OXA-1.</title>
        <authorList>
            <person name="Boyd D.A."/>
            <person name="Mulvey M.R."/>
        </authorList>
    </citation>
    <scope>NOMENCLATURE</scope>
</reference>
<reference key="5">
    <citation type="journal article" date="2009" name="Biochemistry">
        <title>Mutation of the active site carboxy-lysine (K70) of OXA-1 beta-lactamase results in a deacylation-deficient enzyme.</title>
        <authorList>
            <person name="Schneider K.D."/>
            <person name="Bethel C.R."/>
            <person name="Distler A.M."/>
            <person name="Hujer A.M."/>
            <person name="Bonomo R.A."/>
            <person name="Leonard D.A."/>
        </authorList>
    </citation>
    <scope>FUNCTION</scope>
    <scope>CATALYTIC ACTIVITY</scope>
    <scope>MUTAGENESIS OF SER-71 AND LYS-74</scope>
</reference>
<reference key="6">
    <citation type="journal article" date="2010" name="Antimicrob. Agents Chemother.">
        <title>Penicillin sulfone inhibitors of class D beta-lactamases.</title>
        <authorList>
            <person name="Drawz S.M."/>
            <person name="Bethel C.R."/>
            <person name="Doppalapudi V.R."/>
            <person name="Sheri A."/>
            <person name="Pagadala S.R."/>
            <person name="Hujer A.M."/>
            <person name="Skalweit M.J."/>
            <person name="Anderson V.E."/>
            <person name="Chen S.G."/>
            <person name="Buynak J.D."/>
            <person name="Bonomo R.A."/>
        </authorList>
    </citation>
    <scope>FUNCTION</scope>
    <scope>CATALYTIC ACTIVITY</scope>
    <scope>BIOPHYSICOCHEMICAL PROPERTIES</scope>
    <scope>ACTIVITY REGULATION</scope>
</reference>
<reference evidence="12" key="7">
    <citation type="journal article" date="2003" name="Protein Sci.">
        <title>Comparison of beta-lactamases of classes A and D: 1.5-A crystallographic structure of the class D OXA-1 oxacillinase.</title>
        <authorList>
            <person name="Sun T."/>
            <person name="Nukaga M."/>
            <person name="Mayama K."/>
            <person name="Braswell E.H."/>
            <person name="Knox J.R."/>
        </authorList>
    </citation>
    <scope>X-RAY CRYSTALLOGRAPHY (1.5 ANGSTROMS) OF 26-276</scope>
    <scope>PROTEIN SEQUENCE OF N-TERMINUS</scope>
    <scope>SUBUNIT</scope>
    <scope>CARBOXYLATION AT LYS-74</scope>
</reference>
<reference evidence="13" key="8">
    <citation type="journal article" date="2009" name="Biochemistry">
        <title>The 1.4 A crystal structure of the class D beta-lactamase OXA-1 complexed with doripenem.</title>
        <authorList>
            <person name="Schneider K.D."/>
            <person name="Karpen M.E."/>
            <person name="Bonomo R.A."/>
            <person name="Leonard D.A."/>
            <person name="Powers R.A."/>
        </authorList>
    </citation>
    <scope>X-RAY CRYSTALLOGRAPHY (1.40 ANGSTROMS) OF 26-276 IN COMPLEX WITH SUBSTRATE ANALOG INHIBITOR</scope>
    <scope>CARBOXYLATION AT LYS-74</scope>
    <scope>ACTIVE SITE</scope>
</reference>
<reference evidence="14" key="9">
    <citation type="journal article" date="2014" name="Antimicrob. Agents Chemother.">
        <title>Structural origins of oxacillinase specificity in class D beta-lactamases.</title>
        <authorList>
            <person name="June C.M."/>
            <person name="Vallier B.C."/>
            <person name="Bonomo R.A."/>
            <person name="Leonard D.A."/>
            <person name="Powers R.A."/>
        </authorList>
    </citation>
    <scope>X-RAY CRYSTALLOGRAPHY (1.37 ANGSTROMS) OF 26-276 OF MUTANT ASP-74 IN COMPLEX WITH OXACILLIN</scope>
    <scope>ACTIVE SITE</scope>
</reference>
<proteinExistence type="evidence at protein level"/>
<dbReference type="EC" id="3.5.2.6" evidence="2 3 5 7"/>
<dbReference type="EMBL" id="J02967">
    <property type="protein sequence ID" value="AAA91586.2"/>
    <property type="molecule type" value="Genomic_DNA"/>
</dbReference>
<dbReference type="PIR" id="A39880">
    <property type="entry name" value="A39880"/>
</dbReference>
<dbReference type="RefSeq" id="NP_957554.1">
    <property type="nucleotide sequence ID" value="NC_005327.1"/>
</dbReference>
<dbReference type="RefSeq" id="YP_006953880.1">
    <property type="nucleotide sequence ID" value="NC_019089.1"/>
</dbReference>
<dbReference type="RefSeq" id="YP_008574821.1">
    <property type="nucleotide sequence ID" value="NC_022374.1"/>
</dbReference>
<dbReference type="PDB" id="1M6K">
    <property type="method" value="X-ray"/>
    <property type="resolution" value="1.50 A"/>
    <property type="chains" value="A/B=26-276"/>
</dbReference>
<dbReference type="PDB" id="3ISG">
    <property type="method" value="X-ray"/>
    <property type="resolution" value="1.40 A"/>
    <property type="chains" value="A/B=26-276"/>
</dbReference>
<dbReference type="PDB" id="4MLL">
    <property type="method" value="X-ray"/>
    <property type="resolution" value="1.37 A"/>
    <property type="chains" value="A/B/C/D=26-276"/>
</dbReference>
<dbReference type="PDBsum" id="1M6K"/>
<dbReference type="PDBsum" id="3ISG"/>
<dbReference type="PDBsum" id="4MLL"/>
<dbReference type="SMR" id="P13661"/>
<dbReference type="BindingDB" id="P13661"/>
<dbReference type="ChEMBL" id="CHEMBL4951"/>
<dbReference type="DrugBank" id="DB03801">
    <property type="generic name" value="Lysine Nz-Carboxylic Acid"/>
</dbReference>
<dbReference type="DrugCentral" id="P13661"/>
<dbReference type="CARD" id="ARO:3001396">
    <property type="molecule name" value="OXA-1"/>
    <property type="mechanism identifier" value="ARO:0001004"/>
    <property type="mechanism name" value="antibiotic inactivation"/>
</dbReference>
<dbReference type="CARD" id="ARO:3001452">
    <property type="molecule name" value="OXA-140"/>
    <property type="mechanism identifier" value="ARO:0001004"/>
    <property type="mechanism name" value="antibiotic inactivation"/>
</dbReference>
<dbReference type="KEGG" id="ag:AAA91586"/>
<dbReference type="BRENDA" id="3.5.2.6">
    <property type="organism ID" value="2026"/>
</dbReference>
<dbReference type="SABIO-RK" id="P13661"/>
<dbReference type="EvolutionaryTrace" id="P13661"/>
<dbReference type="PRO" id="PR:P13661"/>
<dbReference type="GO" id="GO:0042597">
    <property type="term" value="C:periplasmic space"/>
    <property type="evidence" value="ECO:0007669"/>
    <property type="project" value="UniProtKB-SubCell"/>
</dbReference>
<dbReference type="GO" id="GO:0008800">
    <property type="term" value="F:beta-lactamase activity"/>
    <property type="evidence" value="ECO:0007669"/>
    <property type="project" value="UniProtKB-EC"/>
</dbReference>
<dbReference type="GO" id="GO:0008658">
    <property type="term" value="F:penicillin binding"/>
    <property type="evidence" value="ECO:0007669"/>
    <property type="project" value="InterPro"/>
</dbReference>
<dbReference type="GO" id="GO:0017001">
    <property type="term" value="P:antibiotic catabolic process"/>
    <property type="evidence" value="ECO:0007669"/>
    <property type="project" value="InterPro"/>
</dbReference>
<dbReference type="GO" id="GO:0046677">
    <property type="term" value="P:response to antibiotic"/>
    <property type="evidence" value="ECO:0007669"/>
    <property type="project" value="UniProtKB-KW"/>
</dbReference>
<dbReference type="Gene3D" id="3.40.710.10">
    <property type="entry name" value="DD-peptidase/beta-lactamase superfamily"/>
    <property type="match status" value="1"/>
</dbReference>
<dbReference type="InterPro" id="IPR012338">
    <property type="entry name" value="Beta-lactam/transpept-like"/>
</dbReference>
<dbReference type="InterPro" id="IPR002137">
    <property type="entry name" value="Beta-lactam_class-D_AS"/>
</dbReference>
<dbReference type="InterPro" id="IPR001460">
    <property type="entry name" value="PCN-bd_Tpept"/>
</dbReference>
<dbReference type="NCBIfam" id="NF012161">
    <property type="entry name" value="bla_class_D_main"/>
    <property type="match status" value="1"/>
</dbReference>
<dbReference type="NCBIfam" id="NF000388">
    <property type="entry name" value="blaOXA-1_like"/>
    <property type="match status" value="1"/>
</dbReference>
<dbReference type="Pfam" id="PF00905">
    <property type="entry name" value="Transpeptidase"/>
    <property type="match status" value="1"/>
</dbReference>
<dbReference type="SUPFAM" id="SSF56601">
    <property type="entry name" value="beta-lactamase/transpeptidase-like"/>
    <property type="match status" value="1"/>
</dbReference>
<dbReference type="PROSITE" id="PS00337">
    <property type="entry name" value="BETA_LACTAMASE_D"/>
    <property type="match status" value="1"/>
</dbReference>
<comment type="function">
    <text evidence="3 5 7">Class D beta-lactamase which confers resistance to the beta-lactam antibiotics, including amoxicillin and ticarcillin (PubMed:11353602). Acts via hydrolysis of the beta-lactam ring (PubMed:11353602, PubMed:19485421, PubMed:20086146). Has penicillin- and cephalosporin-hydrolyzing activities (PubMed:11353602, PubMed:19485421, PubMed:20086146).</text>
</comment>
<comment type="catalytic activity">
    <reaction evidence="2 3 5 7">
        <text>a beta-lactam + H2O = a substituted beta-amino acid</text>
        <dbReference type="Rhea" id="RHEA:20401"/>
        <dbReference type="ChEBI" id="CHEBI:15377"/>
        <dbReference type="ChEBI" id="CHEBI:35627"/>
        <dbReference type="ChEBI" id="CHEBI:140347"/>
        <dbReference type="EC" id="3.5.2.6"/>
    </reaction>
</comment>
<comment type="activity regulation">
    <text evidence="7">Inhibited by penicillin sulfones (PubMed:20086146). Only weakly inhibited by clavulanic acid and sulbactam (PubMed:20086146).</text>
</comment>
<comment type="biophysicochemical properties">
    <kinetics>
        <KM evidence="3">2 uM for cloxacillin (at pH 7.0 and 30 degrees Celsius)</KM>
        <KM evidence="7">31 uM for oxacillin (in the presence of 0.02 M NaHCO3)</KM>
        <KM evidence="3">53 uM for amoxicillin (at pH 7.0 and 30 degrees Celsius)</KM>
        <KM evidence="3">5 uM for benzylpenicillin (at pH 7.0 and 30 degrees Celsius)</KM>
        <KM evidence="7">31 uM for ampicillin (in the presence of 0.02 M NaHCO3)</KM>
        <KM evidence="7">80 uM for cephaloridine (in the presence of 0.02 M NaHCO3)</KM>
        <KM evidence="7">9 uM for nitrocefin (in the presence of 0.02 M NaHCO3)</KM>
        <KM evidence="3">215 uM for cefepime (at pH 7.0 and 30 degrees Celsius)</KM>
        <KM evidence="3">110 uM for cefpirome (at pH 7.0 and 30 degrees Celsius)</KM>
        <KM evidence="3">40 uM for cephalothin (at pH 7.0 and 30 degrees Celsius)</KM>
        <KM evidence="3">35 uM for cefotaxime (at pH 7.0 and 30 degrees Celsius)</KM>
        <text evidence="7">kcat is 577 sec(-1) with oxacillin as substrate (in the presence of 0.02 M NaHCO3) (PubMed:20086146). kcat is 357 sec(-1) with ampicillin as substrate (in the presence of 0.02 M NaHCO3) (PubMed:20086146). kcat is 16 sec(-1) with cephaloridine as substrate (in the presence of 0.02 M NaHCO3) (PubMed:20086146). kcat is 94 sec(-1) with nitrocefin as substrate (in the presence of 0.02 M NaHCO3) (PubMed:20086146).</text>
    </kinetics>
</comment>
<comment type="subunit">
    <text evidence="4">Monomer.</text>
</comment>
<comment type="subcellular location">
    <subcellularLocation>
        <location evidence="1">Periplasm</location>
    </subcellularLocation>
</comment>
<comment type="similarity">
    <text evidence="11">Belongs to the class-D beta-lactamase family.</text>
</comment>
<name>BLO1_ECOLX</name>
<sequence>MKNTIHINFAIFLIIANIIYSSASASTDISTVASPLFEGTEGCFLLYDASTNAEIAQFNKAKCATQMAPDSTFKIALSLMAFDAEIIDQKTIFKWDKTPKGMEIWNSNHTPKTWMQFSVVWVSQEITQKIGLNKIKNYLKDFDYGNQDFSGDKERNNGLTEAWLESSLKISPEEQIQFLRKIINHNLPVKNSAIENTIENMYLQDLDNSTKLYGKTGAGFTANRTLQNGWFEGFIISKSGHKYVFVSALTGNLGSNLTSSIKAKKNAITILNTLNL</sequence>
<organism>
    <name type="scientific">Escherichia coli</name>
    <dbReference type="NCBI Taxonomy" id="562"/>
    <lineage>
        <taxon>Bacteria</taxon>
        <taxon>Pseudomonadati</taxon>
        <taxon>Pseudomonadota</taxon>
        <taxon>Gammaproteobacteria</taxon>
        <taxon>Enterobacterales</taxon>
        <taxon>Enterobacteriaceae</taxon>
        <taxon>Escherichia</taxon>
    </lineage>
</organism>
<keyword id="KW-0002">3D-structure</keyword>
<keyword id="KW-0046">Antibiotic resistance</keyword>
<keyword id="KW-0903">Direct protein sequencing</keyword>
<keyword id="KW-0378">Hydrolase</keyword>
<keyword id="KW-0574">Periplasm</keyword>
<keyword id="KW-0614">Plasmid</keyword>
<keyword id="KW-0732">Signal</keyword>
<keyword id="KW-0814">Transposable element</keyword>
<protein>
    <recommendedName>
        <fullName evidence="10">Beta-lactamase OXA-1</fullName>
        <ecNumber evidence="2 3 5 7">3.5.2.6</ecNumber>
    </recommendedName>
    <alternativeName>
        <fullName>Penicillinase</fullName>
    </alternativeName>
</protein>
<geneLocation type="plasmid">
    <name>RGN238</name>
</geneLocation>
<gene>
    <name evidence="10" type="primary">OXA-1</name>
    <name type="synonym">bla</name>
    <name evidence="9" type="synonym">OXA-30</name>
    <name type="synonym">oxa1</name>
</gene>